<feature type="chain" id="PRO_0000406059" description="Tripartite terminase subunit 3">
    <location>
        <begin position="1"/>
        <end position="686"/>
    </location>
</feature>
<feature type="short sequence motif" description="Walker A motif" evidence="1">
    <location>
        <begin position="219"/>
        <end position="226"/>
    </location>
</feature>
<feature type="short sequence motif" description="Walker B motif" evidence="1">
    <location>
        <begin position="314"/>
        <end position="319"/>
    </location>
</feature>
<feature type="active site" description="For ATPase activity" evidence="1">
    <location>
        <position position="319"/>
    </location>
</feature>
<feature type="active site" description="For nuclease activity" evidence="1">
    <location>
        <position position="475"/>
    </location>
</feature>
<feature type="active site" description="For nuclease activity" evidence="1">
    <location>
        <position position="548"/>
    </location>
</feature>
<feature type="active site" description="For nuclease activity" evidence="1">
    <location>
        <position position="660"/>
    </location>
</feature>
<evidence type="ECO:0000255" key="1">
    <source>
        <dbReference type="HAMAP-Rule" id="MF_04013"/>
    </source>
</evidence>
<protein>
    <recommendedName>
        <fullName evidence="1">Tripartite terminase subunit 3</fullName>
        <ecNumber evidence="1">3.1.-.-</ecNumber>
    </recommendedName>
    <alternativeName>
        <fullName evidence="1">Terminase large subunit</fullName>
    </alternativeName>
</protein>
<accession>Q66632</accession>
<accession>Q66637</accession>
<sequence length="686" mass="76458">MILSGKKRMLLDNYKNARAPGGDDERDWVFDRPAIVTRRDKSDRMAHPYIGIIPRTNIYSAVLDSYCKSLNPVYKERIPPVLGTGRDVPVTPANVTGELARAARALCGDLASGDPEALVEFASAVQTQRTSRGCPVFRELSEFLVNLASFLNRCYSVKSDTIEPFQKQLILHTFYFLISIKAPHAANTLFEVFKEYFGLFDMGREALQTFKQKSTVYLIPRRHGKTWIVVAIISMLLTSVENIHVGYVAHQKHVANSVFAEIINTIYRWFPAKNVYIKKENGTIMYTNENRRPSTLMCATCFNKNSIRGQTFNLLYVDEANFIKKDSLPSILGFMLQKDAKIIFISSVNSSDQTTSFLYNLKNAKEKMLNVVNYVCPQHREDFSLQESVVSCPCYRLHIPTYIAIDENIKDTTNLFMEGAFTTELMGDGAAATTQTNMHKVVGEPALVQFDLCRVDTGSPEAQRGLNPTLFLYVDPAYTNNTEASGTGMGAVVSMKNSDRCVVVGVEHFFLKELTGASSLQIASCAAALIRSLATLHPFVREAHVAIEGNSSQDSAVAIATLLHERSPLPVKFLHHADKATGVQWPMYILGAEKARAFETFIYALNSNTLSCGQAIVSNTIKLSFDPVAYLIEQIRAIKCYPLKDGTVSYCAKHKGGSDDTLVAVVMAHYFATSDRHVFKNHMKQI</sequence>
<gene>
    <name evidence="1" type="primary">TRM3</name>
    <name type="ordered locus">29a/29b</name>
</gene>
<dbReference type="EC" id="3.1.-.-" evidence="1"/>
<dbReference type="EMBL" id="U20824">
    <property type="protein sequence ID" value="AAC13821.2"/>
    <property type="molecule type" value="Genomic_DNA"/>
</dbReference>
<dbReference type="PIR" id="S55628">
    <property type="entry name" value="S55628"/>
</dbReference>
<dbReference type="SMR" id="Q66632"/>
<dbReference type="KEGG" id="vg:1461057"/>
<dbReference type="Proteomes" id="UP000007083">
    <property type="component" value="Segment"/>
</dbReference>
<dbReference type="GO" id="GO:0042025">
    <property type="term" value="C:host cell nucleus"/>
    <property type="evidence" value="ECO:0007669"/>
    <property type="project" value="UniProtKB-SubCell"/>
</dbReference>
<dbReference type="GO" id="GO:0003677">
    <property type="term" value="F:DNA binding"/>
    <property type="evidence" value="ECO:0007669"/>
    <property type="project" value="UniProtKB-KW"/>
</dbReference>
<dbReference type="GO" id="GO:0016787">
    <property type="term" value="F:hydrolase activity"/>
    <property type="evidence" value="ECO:0007669"/>
    <property type="project" value="UniProtKB-KW"/>
</dbReference>
<dbReference type="GO" id="GO:0051276">
    <property type="term" value="P:chromosome organization"/>
    <property type="evidence" value="ECO:0007669"/>
    <property type="project" value="InterPro"/>
</dbReference>
<dbReference type="Gene3D" id="3.30.420.320">
    <property type="match status" value="1"/>
</dbReference>
<dbReference type="Gene3D" id="3.40.50.300">
    <property type="entry name" value="P-loop containing nucleotide triphosphate hydrolases"/>
    <property type="match status" value="1"/>
</dbReference>
<dbReference type="HAMAP" id="MF_04013">
    <property type="entry name" value="HSV_TRM3"/>
    <property type="match status" value="1"/>
</dbReference>
<dbReference type="InterPro" id="IPR003498">
    <property type="entry name" value="DNA_pack_C"/>
</dbReference>
<dbReference type="InterPro" id="IPR038435">
    <property type="entry name" value="DNA_pack_C_sf"/>
</dbReference>
<dbReference type="InterPro" id="IPR003499">
    <property type="entry name" value="DNA_pack_N"/>
</dbReference>
<dbReference type="InterPro" id="IPR033663">
    <property type="entry name" value="HSV_TRM3"/>
</dbReference>
<dbReference type="InterPro" id="IPR027417">
    <property type="entry name" value="P-loop_NTPase"/>
</dbReference>
<dbReference type="Pfam" id="PF02499">
    <property type="entry name" value="DNA_pack_C"/>
    <property type="match status" value="1"/>
</dbReference>
<dbReference type="Pfam" id="PF02500">
    <property type="entry name" value="DNA_pack_N"/>
    <property type="match status" value="1"/>
</dbReference>
<comment type="function">
    <text evidence="1">Component of the molecular motor that translocates viral genomic DNA in empty capsid during DNA packaging. Forms a tripartite terminase complex together with TRM1 and TRM2 in the host cytoplasm. Once the complex reaches the host nucleus, it interacts with the capsid portal vertex. This portal forms a ring in which genomic DNA is translocated into the capsid. TRM3 carries an RNase H-like nuclease activity that plays an important role for the cleavage of concatemeric viral DNA into unit length genomes.</text>
</comment>
<comment type="subunit">
    <text evidence="1">Interacts with the terminase subunits TRM1 and TRM2. Interacts with portal protein.</text>
</comment>
<comment type="subcellular location">
    <subcellularLocation>
        <location evidence="1">Host nucleus</location>
    </subcellularLocation>
    <text evidence="1">Responsible for the nuclear localization of the two others subunits TRM1 and TRM2.</text>
</comment>
<comment type="similarity">
    <text evidence="1">Belongs to the herpesviridae TRM3 protein family.</text>
</comment>
<name>TRM3_EHV2</name>
<keyword id="KW-0238">DNA-binding</keyword>
<keyword id="KW-1048">Host nucleus</keyword>
<keyword id="KW-0378">Hydrolase</keyword>
<keyword id="KW-1185">Reference proteome</keyword>
<keyword id="KW-0231">Viral genome packaging</keyword>
<keyword id="KW-1188">Viral release from host cell</keyword>
<organism>
    <name type="scientific">Equine herpesvirus 2 (strain 86/87)</name>
    <name type="common">EHV-2</name>
    <dbReference type="NCBI Taxonomy" id="82831"/>
    <lineage>
        <taxon>Viruses</taxon>
        <taxon>Duplodnaviria</taxon>
        <taxon>Heunggongvirae</taxon>
        <taxon>Peploviricota</taxon>
        <taxon>Herviviricetes</taxon>
        <taxon>Herpesvirales</taxon>
        <taxon>Orthoherpesviridae</taxon>
        <taxon>Gammaherpesvirinae</taxon>
        <taxon>Percavirus</taxon>
        <taxon>Percavirus equidgamma2</taxon>
        <taxon>Equid gammaherpesvirus 2</taxon>
    </lineage>
</organism>
<proteinExistence type="inferred from homology"/>
<reference key="1">
    <citation type="journal article" date="1995" name="J. Mol. Biol.">
        <title>The DNA sequence of equine herpesvirus 2.</title>
        <authorList>
            <person name="Telford E.A.R."/>
            <person name="Watson M.S."/>
            <person name="Aird H.C."/>
            <person name="Perry J."/>
            <person name="Davison A.J."/>
        </authorList>
    </citation>
    <scope>NUCLEOTIDE SEQUENCE [LARGE SCALE GENOMIC DNA]</scope>
</reference>
<reference key="2">
    <citation type="submission" date="2015-01" db="EMBL/GenBank/DDBJ databases">
        <authorList>
            <person name="Davison A.J."/>
        </authorList>
    </citation>
    <scope>SEQUENCE REVISION</scope>
</reference>
<organismHost>
    <name type="scientific">Equus caballus</name>
    <name type="common">Horse</name>
    <dbReference type="NCBI Taxonomy" id="9796"/>
</organismHost>